<protein>
    <recommendedName>
        <fullName evidence="1">Small ribosomal subunit protein uS11</fullName>
    </recommendedName>
    <alternativeName>
        <fullName evidence="2">30S ribosomal protein S11</fullName>
    </alternativeName>
</protein>
<sequence length="130" mass="13654">MSKQAQSRSRKKARKNIPAGLAHIKSTFNNTIVTITDLSGNVIGWSSSGAVGFKGSRKSTPYAAQMAADAAARSAQEHGVKKVDVFVKGPGSGRETAIRSLQTAGLEIGSISDTTPLAFNGCRPPKKRLV</sequence>
<organism>
    <name type="scientific">Tropheryma whipplei (strain TW08/27)</name>
    <name type="common">Whipple's bacillus</name>
    <dbReference type="NCBI Taxonomy" id="218496"/>
    <lineage>
        <taxon>Bacteria</taxon>
        <taxon>Bacillati</taxon>
        <taxon>Actinomycetota</taxon>
        <taxon>Actinomycetes</taxon>
        <taxon>Micrococcales</taxon>
        <taxon>Tropherymataceae</taxon>
        <taxon>Tropheryma</taxon>
    </lineage>
</organism>
<evidence type="ECO:0000255" key="1">
    <source>
        <dbReference type="HAMAP-Rule" id="MF_01310"/>
    </source>
</evidence>
<evidence type="ECO:0000305" key="2"/>
<name>RS11_TROW8</name>
<reference key="1">
    <citation type="journal article" date="2003" name="Lancet">
        <title>Sequencing and analysis of the genome of the Whipple's disease bacterium Tropheryma whipplei.</title>
        <authorList>
            <person name="Bentley S.D."/>
            <person name="Maiwald M."/>
            <person name="Murphy L.D."/>
            <person name="Pallen M.J."/>
            <person name="Yeats C.A."/>
            <person name="Dover L.G."/>
            <person name="Norbertczak H.T."/>
            <person name="Besra G.S."/>
            <person name="Quail M.A."/>
            <person name="Harris D.E."/>
            <person name="von Herbay A."/>
            <person name="Goble A."/>
            <person name="Rutter S."/>
            <person name="Squares R."/>
            <person name="Squares S."/>
            <person name="Barrell B.G."/>
            <person name="Parkhill J."/>
            <person name="Relman D.A."/>
        </authorList>
    </citation>
    <scope>NUCLEOTIDE SEQUENCE [LARGE SCALE GENOMIC DNA]</scope>
    <source>
        <strain>TW08/27</strain>
    </source>
</reference>
<dbReference type="EMBL" id="BX251410">
    <property type="protein sequence ID" value="CAD66908.1"/>
    <property type="molecule type" value="Genomic_DNA"/>
</dbReference>
<dbReference type="RefSeq" id="WP_011096189.1">
    <property type="nucleotide sequence ID" value="NC_004551.1"/>
</dbReference>
<dbReference type="SMR" id="P66366"/>
<dbReference type="GeneID" id="67388007"/>
<dbReference type="KEGG" id="tws:TW231"/>
<dbReference type="HOGENOM" id="CLU_072439_5_0_11"/>
<dbReference type="GO" id="GO:1990904">
    <property type="term" value="C:ribonucleoprotein complex"/>
    <property type="evidence" value="ECO:0007669"/>
    <property type="project" value="UniProtKB-KW"/>
</dbReference>
<dbReference type="GO" id="GO:0005840">
    <property type="term" value="C:ribosome"/>
    <property type="evidence" value="ECO:0007669"/>
    <property type="project" value="UniProtKB-KW"/>
</dbReference>
<dbReference type="GO" id="GO:0019843">
    <property type="term" value="F:rRNA binding"/>
    <property type="evidence" value="ECO:0007669"/>
    <property type="project" value="UniProtKB-UniRule"/>
</dbReference>
<dbReference type="GO" id="GO:0003735">
    <property type="term" value="F:structural constituent of ribosome"/>
    <property type="evidence" value="ECO:0007669"/>
    <property type="project" value="InterPro"/>
</dbReference>
<dbReference type="GO" id="GO:0006412">
    <property type="term" value="P:translation"/>
    <property type="evidence" value="ECO:0007669"/>
    <property type="project" value="UniProtKB-UniRule"/>
</dbReference>
<dbReference type="FunFam" id="3.30.420.80:FF:000001">
    <property type="entry name" value="30S ribosomal protein S11"/>
    <property type="match status" value="1"/>
</dbReference>
<dbReference type="Gene3D" id="3.30.420.80">
    <property type="entry name" value="Ribosomal protein S11"/>
    <property type="match status" value="1"/>
</dbReference>
<dbReference type="HAMAP" id="MF_01310">
    <property type="entry name" value="Ribosomal_uS11"/>
    <property type="match status" value="1"/>
</dbReference>
<dbReference type="InterPro" id="IPR001971">
    <property type="entry name" value="Ribosomal_uS11"/>
</dbReference>
<dbReference type="InterPro" id="IPR019981">
    <property type="entry name" value="Ribosomal_uS11_bac-type"/>
</dbReference>
<dbReference type="InterPro" id="IPR018102">
    <property type="entry name" value="Ribosomal_uS11_CS"/>
</dbReference>
<dbReference type="InterPro" id="IPR036967">
    <property type="entry name" value="Ribosomal_uS11_sf"/>
</dbReference>
<dbReference type="NCBIfam" id="NF003698">
    <property type="entry name" value="PRK05309.1"/>
    <property type="match status" value="1"/>
</dbReference>
<dbReference type="NCBIfam" id="TIGR03632">
    <property type="entry name" value="uS11_bact"/>
    <property type="match status" value="1"/>
</dbReference>
<dbReference type="PANTHER" id="PTHR11759">
    <property type="entry name" value="40S RIBOSOMAL PROTEIN S14/30S RIBOSOMAL PROTEIN S11"/>
    <property type="match status" value="1"/>
</dbReference>
<dbReference type="Pfam" id="PF00411">
    <property type="entry name" value="Ribosomal_S11"/>
    <property type="match status" value="1"/>
</dbReference>
<dbReference type="PIRSF" id="PIRSF002131">
    <property type="entry name" value="Ribosomal_S11"/>
    <property type="match status" value="1"/>
</dbReference>
<dbReference type="SUPFAM" id="SSF53137">
    <property type="entry name" value="Translational machinery components"/>
    <property type="match status" value="1"/>
</dbReference>
<dbReference type="PROSITE" id="PS00054">
    <property type="entry name" value="RIBOSOMAL_S11"/>
    <property type="match status" value="1"/>
</dbReference>
<proteinExistence type="inferred from homology"/>
<feature type="chain" id="PRO_0000123251" description="Small ribosomal subunit protein uS11">
    <location>
        <begin position="1"/>
        <end position="130"/>
    </location>
</feature>
<comment type="function">
    <text evidence="1">Located on the platform of the 30S subunit, it bridges several disparate RNA helices of the 16S rRNA. Forms part of the Shine-Dalgarno cleft in the 70S ribosome.</text>
</comment>
<comment type="subunit">
    <text evidence="1">Part of the 30S ribosomal subunit. Interacts with proteins S7 and S18. Binds to IF-3.</text>
</comment>
<comment type="similarity">
    <text evidence="1">Belongs to the universal ribosomal protein uS11 family.</text>
</comment>
<accession>P66366</accession>
<accession>Q83G09</accession>
<accession>Q83I56</accession>
<keyword id="KW-0687">Ribonucleoprotein</keyword>
<keyword id="KW-0689">Ribosomal protein</keyword>
<keyword id="KW-0694">RNA-binding</keyword>
<keyword id="KW-0699">rRNA-binding</keyword>
<gene>
    <name evidence="1" type="primary">rpsK</name>
    <name type="ordered locus">TW231</name>
</gene>